<evidence type="ECO:0000255" key="1">
    <source>
        <dbReference type="PROSITE-ProRule" id="PRU00108"/>
    </source>
</evidence>
<evidence type="ECO:0000256" key="2">
    <source>
        <dbReference type="SAM" id="MobiDB-lite"/>
    </source>
</evidence>
<evidence type="ECO:0000305" key="3"/>
<dbReference type="EMBL" id="Z14313">
    <property type="protein sequence ID" value="CAA78665.1"/>
    <property type="molecule type" value="mRNA"/>
</dbReference>
<dbReference type="PIR" id="A49130">
    <property type="entry name" value="S24705"/>
</dbReference>
<dbReference type="SMR" id="Q01622"/>
<dbReference type="STRING" id="6412.Q01622"/>
<dbReference type="eggNOG" id="KOG0489">
    <property type="taxonomic scope" value="Eukaryota"/>
</dbReference>
<dbReference type="InParanoid" id="Q01622"/>
<dbReference type="Proteomes" id="UP000015101">
    <property type="component" value="Unassembled WGS sequence"/>
</dbReference>
<dbReference type="GO" id="GO:0005634">
    <property type="term" value="C:nucleus"/>
    <property type="evidence" value="ECO:0000318"/>
    <property type="project" value="GO_Central"/>
</dbReference>
<dbReference type="GO" id="GO:0000981">
    <property type="term" value="F:DNA-binding transcription factor activity, RNA polymerase II-specific"/>
    <property type="evidence" value="ECO:0000318"/>
    <property type="project" value="GO_Central"/>
</dbReference>
<dbReference type="GO" id="GO:0000978">
    <property type="term" value="F:RNA polymerase II cis-regulatory region sequence-specific DNA binding"/>
    <property type="evidence" value="ECO:0000318"/>
    <property type="project" value="GO_Central"/>
</dbReference>
<dbReference type="GO" id="GO:0009952">
    <property type="term" value="P:anterior/posterior pattern specification"/>
    <property type="evidence" value="ECO:0000318"/>
    <property type="project" value="GO_Central"/>
</dbReference>
<dbReference type="GO" id="GO:0006357">
    <property type="term" value="P:regulation of transcription by RNA polymerase II"/>
    <property type="evidence" value="ECO:0000318"/>
    <property type="project" value="GO_Central"/>
</dbReference>
<dbReference type="CDD" id="cd00086">
    <property type="entry name" value="homeodomain"/>
    <property type="match status" value="1"/>
</dbReference>
<dbReference type="FunFam" id="1.10.10.60:FF:000193">
    <property type="entry name" value="Ultrabithorax, isoform C"/>
    <property type="match status" value="1"/>
</dbReference>
<dbReference type="Gene3D" id="1.10.10.60">
    <property type="entry name" value="Homeodomain-like"/>
    <property type="match status" value="1"/>
</dbReference>
<dbReference type="InterPro" id="IPR050296">
    <property type="entry name" value="Antp_homeobox"/>
</dbReference>
<dbReference type="InterPro" id="IPR001356">
    <property type="entry name" value="HD"/>
</dbReference>
<dbReference type="InterPro" id="IPR020479">
    <property type="entry name" value="HD_metazoa"/>
</dbReference>
<dbReference type="InterPro" id="IPR017970">
    <property type="entry name" value="Homeobox_CS"/>
</dbReference>
<dbReference type="InterPro" id="IPR009057">
    <property type="entry name" value="Homeodomain-like_sf"/>
</dbReference>
<dbReference type="PANTHER" id="PTHR45659:SF4">
    <property type="entry name" value="HOMEOBOX PROTEIN ABDOMINAL-A"/>
    <property type="match status" value="1"/>
</dbReference>
<dbReference type="PANTHER" id="PTHR45659">
    <property type="entry name" value="HOMEOBOX PROTEIN HOX"/>
    <property type="match status" value="1"/>
</dbReference>
<dbReference type="Pfam" id="PF00046">
    <property type="entry name" value="Homeodomain"/>
    <property type="match status" value="1"/>
</dbReference>
<dbReference type="PRINTS" id="PR00024">
    <property type="entry name" value="HOMEOBOX"/>
</dbReference>
<dbReference type="SMART" id="SM00389">
    <property type="entry name" value="HOX"/>
    <property type="match status" value="1"/>
</dbReference>
<dbReference type="SUPFAM" id="SSF46689">
    <property type="entry name" value="Homeodomain-like"/>
    <property type="match status" value="1"/>
</dbReference>
<dbReference type="PROSITE" id="PS00027">
    <property type="entry name" value="HOMEOBOX_1"/>
    <property type="match status" value="1"/>
</dbReference>
<dbReference type="PROSITE" id="PS50071">
    <property type="entry name" value="HOMEOBOX_2"/>
    <property type="match status" value="1"/>
</dbReference>
<protein>
    <recommendedName>
        <fullName>Homeobox protein LOX2</fullName>
    </recommendedName>
</protein>
<proteinExistence type="evidence at transcript level"/>
<comment type="function">
    <text>Sequence-specific transcription factor which is part of a developmental regulatory system that provides cells with specific positional identities on the anterior-posterior axis. May play a role in midgut regionalization.</text>
</comment>
<comment type="subcellular location">
    <subcellularLocation>
        <location evidence="3">Nucleus</location>
    </subcellularLocation>
</comment>
<comment type="tissue specificity">
    <text>Restricted to the posterior 16 midbody segments. Expressed in the dorsoventral muscles, which arise from the septal mesoderm and lie in the groove of the intercaecal constrictions.</text>
</comment>
<comment type="developmental stage">
    <text>Largest accumulation of transcripts is seen in the posterior 16 midbody segments of the leech embryo between days 7 and 14.</text>
</comment>
<comment type="similarity">
    <text evidence="3">Belongs to the Antp homeobox family.</text>
</comment>
<sequence length="429" mass="47016">NNNNNINNNNSRLNIATSSSATPSTTFQQKSPYYDTTTSTTVTSLTSTDYSSYQQQQQLLLAEFDTDYKENAEQFADVSVQNVNISCSNSNNNNTDLNNNSSKCMNNSNIIIDNNSTDSFQQKQHPETTEDTKYNAETEEDRKSHGKAFGGHFASSRYGIDDDVISNRTGSRPSSPASTTPSCENFSPHSPSMKGGKMGSAPSYPWMSIVGPNSNQRRRGRQTYTRYQTLELEKEFKFNRYLTRRRRIELSHTLYLTERQIKIWFQNRRMKEKKEVQAIRELNEIEKTKIGCFGSLRSPCDDDDDDDDDIDGSGSSGVCGVASGGIGGGDCRKVSGNSGSSRNGLSSNGGNVMGGINGAGGGANVVNHDELITSCRDVPSQQNCLNGNNNNNNNINNNNINNNNGVEMMVGMVCSSGRMMMEGVDYGGG</sequence>
<name>HLOX2_HELRO</name>
<feature type="chain" id="PRO_0000200256" description="Homeobox protein LOX2">
    <location>
        <begin position="1" status="less than"/>
        <end position="429"/>
    </location>
</feature>
<feature type="DNA-binding region" description="Homeobox" evidence="1">
    <location>
        <begin position="217"/>
        <end position="276"/>
    </location>
</feature>
<feature type="region of interest" description="Disordered" evidence="2">
    <location>
        <begin position="1"/>
        <end position="32"/>
    </location>
</feature>
<feature type="region of interest" description="Disordered" evidence="2">
    <location>
        <begin position="117"/>
        <end position="221"/>
    </location>
</feature>
<feature type="compositionally biased region" description="Low complexity" evidence="2">
    <location>
        <begin position="1"/>
        <end position="26"/>
    </location>
</feature>
<feature type="compositionally biased region" description="Basic and acidic residues" evidence="2">
    <location>
        <begin position="124"/>
        <end position="143"/>
    </location>
</feature>
<feature type="compositionally biased region" description="Low complexity" evidence="2">
    <location>
        <begin position="169"/>
        <end position="182"/>
    </location>
</feature>
<feature type="non-terminal residue">
    <location>
        <position position="1"/>
    </location>
</feature>
<keyword id="KW-0217">Developmental protein</keyword>
<keyword id="KW-0238">DNA-binding</keyword>
<keyword id="KW-0371">Homeobox</keyword>
<keyword id="KW-0539">Nucleus</keyword>
<keyword id="KW-1185">Reference proteome</keyword>
<organism>
    <name type="scientific">Helobdella robusta</name>
    <name type="common">Californian leech</name>
    <dbReference type="NCBI Taxonomy" id="6412"/>
    <lineage>
        <taxon>Eukaryota</taxon>
        <taxon>Metazoa</taxon>
        <taxon>Spiralia</taxon>
        <taxon>Lophotrochozoa</taxon>
        <taxon>Annelida</taxon>
        <taxon>Clitellata</taxon>
        <taxon>Hirudinea</taxon>
        <taxon>Rhynchobdellida</taxon>
        <taxon>Glossiphoniidae</taxon>
        <taxon>Helobdella</taxon>
    </lineage>
</organism>
<accession>Q01622</accession>
<reference key="1">
    <citation type="journal article" date="1992" name="Development">
        <title>Lox2, a putative leech segment identity gene, is expressed in the same segmental domain in different stem cell lineages.</title>
        <authorList>
            <person name="Nardelli-Haefliger D."/>
            <person name="Shankland M."/>
        </authorList>
    </citation>
    <scope>NUCLEOTIDE SEQUENCE [MRNA]</scope>
</reference>
<gene>
    <name type="primary">LOX2</name>
</gene>